<comment type="function">
    <text evidence="1">Plays a major role in regulating hemoglobin oxygen affinity by controlling the levels of its allosteric effector 2,3-bisphosphoglycerate (2,3-BPG). Also exhibits mutase (EC 5.4.2.11) activity.</text>
</comment>
<comment type="catalytic activity">
    <reaction evidence="1">
        <text>(2R)-3-phospho-glyceroyl phosphate = (2R)-2,3-bisphosphoglycerate + H(+)</text>
        <dbReference type="Rhea" id="RHEA:17765"/>
        <dbReference type="ChEBI" id="CHEBI:15378"/>
        <dbReference type="ChEBI" id="CHEBI:57604"/>
        <dbReference type="ChEBI" id="CHEBI:58248"/>
        <dbReference type="EC" id="5.4.2.4"/>
    </reaction>
</comment>
<comment type="catalytic activity">
    <reaction evidence="1">
        <text>(2R)-2-phosphoglycerate = (2R)-3-phosphoglycerate</text>
        <dbReference type="Rhea" id="RHEA:15901"/>
        <dbReference type="ChEBI" id="CHEBI:58272"/>
        <dbReference type="ChEBI" id="CHEBI:58289"/>
        <dbReference type="EC" id="5.4.2.11"/>
    </reaction>
</comment>
<comment type="activity regulation">
    <text evidence="1">At alkaline pH BPGM favors the synthase reaction; however, at lower pH the phosphatase reaction is dominant. Inhibited by citrate.</text>
</comment>
<comment type="subunit">
    <text>Homodimer.</text>
</comment>
<comment type="tissue specificity">
    <text evidence="2 3">Expressed in red blood cells. Expressed in placenta (labyrinthine trophoblasts).</text>
</comment>
<comment type="similarity">
    <text evidence="4">Belongs to the phosphoglycerate mutase family. BPG-dependent PGAM subfamily.</text>
</comment>
<name>PMGE_MOUSE</name>
<keyword id="KW-0007">Acetylation</keyword>
<keyword id="KW-0324">Glycolysis</keyword>
<keyword id="KW-0378">Hydrolase</keyword>
<keyword id="KW-0413">Isomerase</keyword>
<keyword id="KW-0597">Phosphoprotein</keyword>
<keyword id="KW-1185">Reference proteome</keyword>
<proteinExistence type="evidence at protein level"/>
<protein>
    <recommendedName>
        <fullName>Bisphosphoglycerate mutase</fullName>
        <shortName>BPGM</shortName>
        <ecNumber evidence="1">5.4.2.4</ecNumber>
    </recommendedName>
    <alternativeName>
        <fullName>2,3-bisphosphoglycerate mutase, erythrocyte</fullName>
    </alternativeName>
    <alternativeName>
        <fullName>2,3-bisphosphoglycerate synthase</fullName>
        <ecNumber evidence="1">5.4.2.11</ecNumber>
    </alternativeName>
    <alternativeName>
        <fullName>BPG-dependent PGAM</fullName>
    </alternativeName>
</protein>
<dbReference type="EC" id="5.4.2.4" evidence="1"/>
<dbReference type="EC" id="5.4.2.11" evidence="1"/>
<dbReference type="EMBL" id="X13586">
    <property type="protein sequence ID" value="CAA31927.1"/>
    <property type="molecule type" value="mRNA"/>
</dbReference>
<dbReference type="EMBL" id="AK043412">
    <property type="protein sequence ID" value="BAC31541.1"/>
    <property type="molecule type" value="mRNA"/>
</dbReference>
<dbReference type="EMBL" id="AK078119">
    <property type="protein sequence ID" value="BAC37133.1"/>
    <property type="molecule type" value="mRNA"/>
</dbReference>
<dbReference type="EMBL" id="BC004589">
    <property type="protein sequence ID" value="AAH04589.1"/>
    <property type="molecule type" value="mRNA"/>
</dbReference>
<dbReference type="CCDS" id="CCDS19994.1"/>
<dbReference type="PIR" id="A31585">
    <property type="entry name" value="PMMSBM"/>
</dbReference>
<dbReference type="RefSeq" id="NP_031589.1">
    <property type="nucleotide sequence ID" value="NM_007563.5"/>
</dbReference>
<dbReference type="SMR" id="P15327"/>
<dbReference type="BioGRID" id="198382">
    <property type="interactions" value="1"/>
</dbReference>
<dbReference type="FunCoup" id="P15327">
    <property type="interactions" value="550"/>
</dbReference>
<dbReference type="STRING" id="10090.ENSMUSP00000047393"/>
<dbReference type="GlyGen" id="P15327">
    <property type="glycosylation" value="3 sites, 1 N-linked glycan (1 site), 1 O-linked glycan (1 site)"/>
</dbReference>
<dbReference type="iPTMnet" id="P15327"/>
<dbReference type="PhosphoSitePlus" id="P15327"/>
<dbReference type="SwissPalm" id="P15327"/>
<dbReference type="REPRODUCTION-2DPAGE" id="P15327"/>
<dbReference type="CPTAC" id="non-CPTAC-3373"/>
<dbReference type="jPOST" id="P15327"/>
<dbReference type="PaxDb" id="10090-ENSMUSP00000047393"/>
<dbReference type="PeptideAtlas" id="P15327"/>
<dbReference type="ProteomicsDB" id="291764"/>
<dbReference type="Pumba" id="P15327"/>
<dbReference type="Antibodypedia" id="2975">
    <property type="antibodies" value="260 antibodies from 28 providers"/>
</dbReference>
<dbReference type="DNASU" id="12183"/>
<dbReference type="Ensembl" id="ENSMUST00000045372.6">
    <property type="protein sequence ID" value="ENSMUSP00000047393.6"/>
    <property type="gene ID" value="ENSMUSG00000038871.6"/>
</dbReference>
<dbReference type="GeneID" id="12183"/>
<dbReference type="KEGG" id="mmu:12183"/>
<dbReference type="UCSC" id="uc009bhf.1">
    <property type="organism name" value="mouse"/>
</dbReference>
<dbReference type="AGR" id="MGI:1098242"/>
<dbReference type="CTD" id="669"/>
<dbReference type="MGI" id="MGI:1098242">
    <property type="gene designation" value="Bpgm"/>
</dbReference>
<dbReference type="VEuPathDB" id="HostDB:ENSMUSG00000038871"/>
<dbReference type="eggNOG" id="KOG0235">
    <property type="taxonomic scope" value="Eukaryota"/>
</dbReference>
<dbReference type="GeneTree" id="ENSGT00950000182926"/>
<dbReference type="HOGENOM" id="CLU_033323_1_1_1"/>
<dbReference type="InParanoid" id="P15327"/>
<dbReference type="OMA" id="TGWHDVP"/>
<dbReference type="OrthoDB" id="354304at2759"/>
<dbReference type="PhylomeDB" id="P15327"/>
<dbReference type="TreeFam" id="TF300007"/>
<dbReference type="Reactome" id="R-MMU-70171">
    <property type="pathway name" value="Glycolysis"/>
</dbReference>
<dbReference type="BioGRID-ORCS" id="12183">
    <property type="hits" value="1 hit in 76 CRISPR screens"/>
</dbReference>
<dbReference type="ChiTaRS" id="Bpgm">
    <property type="organism name" value="mouse"/>
</dbReference>
<dbReference type="PRO" id="PR:P15327"/>
<dbReference type="Proteomes" id="UP000000589">
    <property type="component" value="Chromosome 6"/>
</dbReference>
<dbReference type="RNAct" id="P15327">
    <property type="molecule type" value="protein"/>
</dbReference>
<dbReference type="Bgee" id="ENSMUSG00000038871">
    <property type="expression patterns" value="Expressed in blood and 266 other cell types or tissues"/>
</dbReference>
<dbReference type="ExpressionAtlas" id="P15327">
    <property type="expression patterns" value="baseline and differential"/>
</dbReference>
<dbReference type="GO" id="GO:0004082">
    <property type="term" value="F:bisphosphoglycerate mutase activity"/>
    <property type="evidence" value="ECO:0000315"/>
    <property type="project" value="MGI"/>
</dbReference>
<dbReference type="GO" id="GO:0016787">
    <property type="term" value="F:hydrolase activity"/>
    <property type="evidence" value="ECO:0007669"/>
    <property type="project" value="UniProtKB-KW"/>
</dbReference>
<dbReference type="GO" id="GO:0004619">
    <property type="term" value="F:phosphoglycerate mutase activity"/>
    <property type="evidence" value="ECO:0007669"/>
    <property type="project" value="UniProtKB-EC"/>
</dbReference>
<dbReference type="GO" id="GO:0033554">
    <property type="term" value="P:cellular response to stress"/>
    <property type="evidence" value="ECO:0000315"/>
    <property type="project" value="MGI"/>
</dbReference>
<dbReference type="GO" id="GO:0042832">
    <property type="term" value="P:defense response to protozoan"/>
    <property type="evidence" value="ECO:0000315"/>
    <property type="project" value="MGI"/>
</dbReference>
<dbReference type="GO" id="GO:0048821">
    <property type="term" value="P:erythrocyte development"/>
    <property type="evidence" value="ECO:0000315"/>
    <property type="project" value="MGI"/>
</dbReference>
<dbReference type="GO" id="GO:0060856">
    <property type="term" value="P:establishment of blood-brain barrier"/>
    <property type="evidence" value="ECO:0000315"/>
    <property type="project" value="MGI"/>
</dbReference>
<dbReference type="GO" id="GO:0006096">
    <property type="term" value="P:glycolytic process"/>
    <property type="evidence" value="ECO:0000315"/>
    <property type="project" value="MGI"/>
</dbReference>
<dbReference type="GO" id="GO:0150076">
    <property type="term" value="P:neuroinflammatory response"/>
    <property type="evidence" value="ECO:0000315"/>
    <property type="project" value="MGI"/>
</dbReference>
<dbReference type="GO" id="GO:0006753">
    <property type="term" value="P:nucleoside phosphate metabolic process"/>
    <property type="evidence" value="ECO:0000315"/>
    <property type="project" value="MGI"/>
</dbReference>
<dbReference type="GO" id="GO:0015671">
    <property type="term" value="P:oxygen transport"/>
    <property type="evidence" value="ECO:0000315"/>
    <property type="project" value="MGI"/>
</dbReference>
<dbReference type="CDD" id="cd07067">
    <property type="entry name" value="HP_PGM_like"/>
    <property type="match status" value="1"/>
</dbReference>
<dbReference type="FunFam" id="3.40.50.1240:FF:000012">
    <property type="entry name" value="Phosphoglycerate mutase 1"/>
    <property type="match status" value="1"/>
</dbReference>
<dbReference type="Gene3D" id="3.40.50.1240">
    <property type="entry name" value="Phosphoglycerate mutase-like"/>
    <property type="match status" value="1"/>
</dbReference>
<dbReference type="HAMAP" id="MF_01039">
    <property type="entry name" value="PGAM_GpmA"/>
    <property type="match status" value="1"/>
</dbReference>
<dbReference type="InterPro" id="IPR013078">
    <property type="entry name" value="His_Pase_superF_clade-1"/>
</dbReference>
<dbReference type="InterPro" id="IPR029033">
    <property type="entry name" value="His_PPase_superfam"/>
</dbReference>
<dbReference type="InterPro" id="IPR001345">
    <property type="entry name" value="PG/BPGM_mutase_AS"/>
</dbReference>
<dbReference type="InterPro" id="IPR005952">
    <property type="entry name" value="Phosphogly_mut1"/>
</dbReference>
<dbReference type="NCBIfam" id="TIGR01258">
    <property type="entry name" value="pgm_1"/>
    <property type="match status" value="1"/>
</dbReference>
<dbReference type="NCBIfam" id="NF010713">
    <property type="entry name" value="PRK14115.1"/>
    <property type="match status" value="1"/>
</dbReference>
<dbReference type="PANTHER" id="PTHR11931">
    <property type="entry name" value="PHOSPHOGLYCERATE MUTASE"/>
    <property type="match status" value="1"/>
</dbReference>
<dbReference type="Pfam" id="PF00300">
    <property type="entry name" value="His_Phos_1"/>
    <property type="match status" value="2"/>
</dbReference>
<dbReference type="PIRSF" id="PIRSF000709">
    <property type="entry name" value="6PFK_2-Ptase"/>
    <property type="match status" value="1"/>
</dbReference>
<dbReference type="SMART" id="SM00855">
    <property type="entry name" value="PGAM"/>
    <property type="match status" value="1"/>
</dbReference>
<dbReference type="SUPFAM" id="SSF53254">
    <property type="entry name" value="Phosphoglycerate mutase-like"/>
    <property type="match status" value="1"/>
</dbReference>
<dbReference type="PROSITE" id="PS00175">
    <property type="entry name" value="PG_MUTASE"/>
    <property type="match status" value="1"/>
</dbReference>
<accession>P15327</accession>
<accession>Q543Z6</accession>
<organism>
    <name type="scientific">Mus musculus</name>
    <name type="common">Mouse</name>
    <dbReference type="NCBI Taxonomy" id="10090"/>
    <lineage>
        <taxon>Eukaryota</taxon>
        <taxon>Metazoa</taxon>
        <taxon>Chordata</taxon>
        <taxon>Craniata</taxon>
        <taxon>Vertebrata</taxon>
        <taxon>Euteleostomi</taxon>
        <taxon>Mammalia</taxon>
        <taxon>Eutheria</taxon>
        <taxon>Euarchontoglires</taxon>
        <taxon>Glires</taxon>
        <taxon>Rodentia</taxon>
        <taxon>Myomorpha</taxon>
        <taxon>Muroidea</taxon>
        <taxon>Muridae</taxon>
        <taxon>Murinae</taxon>
        <taxon>Mus</taxon>
        <taxon>Mus</taxon>
    </lineage>
</organism>
<reference key="1">
    <citation type="journal article" date="1988" name="Biochem. Biophys. Res. Commun.">
        <title>Molecular cloning and nucleotide sequence of murine 2,3-bisphosphoglycerate mutase cDNA.</title>
        <authorList>
            <person name="le Boulch P."/>
            <person name="Joulin V."/>
            <person name="Garel M.-C."/>
            <person name="Rosa J."/>
            <person name="Cohen-Solal M."/>
        </authorList>
    </citation>
    <scope>NUCLEOTIDE SEQUENCE [MRNA]</scope>
    <scope>TISSUE SPECIFICITY</scope>
    <source>
        <tissue>Spleen</tissue>
    </source>
</reference>
<reference key="2">
    <citation type="journal article" date="2005" name="Science">
        <title>The transcriptional landscape of the mammalian genome.</title>
        <authorList>
            <person name="Carninci P."/>
            <person name="Kasukawa T."/>
            <person name="Katayama S."/>
            <person name="Gough J."/>
            <person name="Frith M.C."/>
            <person name="Maeda N."/>
            <person name="Oyama R."/>
            <person name="Ravasi T."/>
            <person name="Lenhard B."/>
            <person name="Wells C."/>
            <person name="Kodzius R."/>
            <person name="Shimokawa K."/>
            <person name="Bajic V.B."/>
            <person name="Brenner S.E."/>
            <person name="Batalov S."/>
            <person name="Forrest A.R."/>
            <person name="Zavolan M."/>
            <person name="Davis M.J."/>
            <person name="Wilming L.G."/>
            <person name="Aidinis V."/>
            <person name="Allen J.E."/>
            <person name="Ambesi-Impiombato A."/>
            <person name="Apweiler R."/>
            <person name="Aturaliya R.N."/>
            <person name="Bailey T.L."/>
            <person name="Bansal M."/>
            <person name="Baxter L."/>
            <person name="Beisel K.W."/>
            <person name="Bersano T."/>
            <person name="Bono H."/>
            <person name="Chalk A.M."/>
            <person name="Chiu K.P."/>
            <person name="Choudhary V."/>
            <person name="Christoffels A."/>
            <person name="Clutterbuck D.R."/>
            <person name="Crowe M.L."/>
            <person name="Dalla E."/>
            <person name="Dalrymple B.P."/>
            <person name="de Bono B."/>
            <person name="Della Gatta G."/>
            <person name="di Bernardo D."/>
            <person name="Down T."/>
            <person name="Engstrom P."/>
            <person name="Fagiolini M."/>
            <person name="Faulkner G."/>
            <person name="Fletcher C.F."/>
            <person name="Fukushima T."/>
            <person name="Furuno M."/>
            <person name="Futaki S."/>
            <person name="Gariboldi M."/>
            <person name="Georgii-Hemming P."/>
            <person name="Gingeras T.R."/>
            <person name="Gojobori T."/>
            <person name="Green R.E."/>
            <person name="Gustincich S."/>
            <person name="Harbers M."/>
            <person name="Hayashi Y."/>
            <person name="Hensch T.K."/>
            <person name="Hirokawa N."/>
            <person name="Hill D."/>
            <person name="Huminiecki L."/>
            <person name="Iacono M."/>
            <person name="Ikeo K."/>
            <person name="Iwama A."/>
            <person name="Ishikawa T."/>
            <person name="Jakt M."/>
            <person name="Kanapin A."/>
            <person name="Katoh M."/>
            <person name="Kawasawa Y."/>
            <person name="Kelso J."/>
            <person name="Kitamura H."/>
            <person name="Kitano H."/>
            <person name="Kollias G."/>
            <person name="Krishnan S.P."/>
            <person name="Kruger A."/>
            <person name="Kummerfeld S.K."/>
            <person name="Kurochkin I.V."/>
            <person name="Lareau L.F."/>
            <person name="Lazarevic D."/>
            <person name="Lipovich L."/>
            <person name="Liu J."/>
            <person name="Liuni S."/>
            <person name="McWilliam S."/>
            <person name="Madan Babu M."/>
            <person name="Madera M."/>
            <person name="Marchionni L."/>
            <person name="Matsuda H."/>
            <person name="Matsuzawa S."/>
            <person name="Miki H."/>
            <person name="Mignone F."/>
            <person name="Miyake S."/>
            <person name="Morris K."/>
            <person name="Mottagui-Tabar S."/>
            <person name="Mulder N."/>
            <person name="Nakano N."/>
            <person name="Nakauchi H."/>
            <person name="Ng P."/>
            <person name="Nilsson R."/>
            <person name="Nishiguchi S."/>
            <person name="Nishikawa S."/>
            <person name="Nori F."/>
            <person name="Ohara O."/>
            <person name="Okazaki Y."/>
            <person name="Orlando V."/>
            <person name="Pang K.C."/>
            <person name="Pavan W.J."/>
            <person name="Pavesi G."/>
            <person name="Pesole G."/>
            <person name="Petrovsky N."/>
            <person name="Piazza S."/>
            <person name="Reed J."/>
            <person name="Reid J.F."/>
            <person name="Ring B.Z."/>
            <person name="Ringwald M."/>
            <person name="Rost B."/>
            <person name="Ruan Y."/>
            <person name="Salzberg S.L."/>
            <person name="Sandelin A."/>
            <person name="Schneider C."/>
            <person name="Schoenbach C."/>
            <person name="Sekiguchi K."/>
            <person name="Semple C.A."/>
            <person name="Seno S."/>
            <person name="Sessa L."/>
            <person name="Sheng Y."/>
            <person name="Shibata Y."/>
            <person name="Shimada H."/>
            <person name="Shimada K."/>
            <person name="Silva D."/>
            <person name="Sinclair B."/>
            <person name="Sperling S."/>
            <person name="Stupka E."/>
            <person name="Sugiura K."/>
            <person name="Sultana R."/>
            <person name="Takenaka Y."/>
            <person name="Taki K."/>
            <person name="Tammoja K."/>
            <person name="Tan S.L."/>
            <person name="Tang S."/>
            <person name="Taylor M.S."/>
            <person name="Tegner J."/>
            <person name="Teichmann S.A."/>
            <person name="Ueda H.R."/>
            <person name="van Nimwegen E."/>
            <person name="Verardo R."/>
            <person name="Wei C.L."/>
            <person name="Yagi K."/>
            <person name="Yamanishi H."/>
            <person name="Zabarovsky E."/>
            <person name="Zhu S."/>
            <person name="Zimmer A."/>
            <person name="Hide W."/>
            <person name="Bult C."/>
            <person name="Grimmond S.M."/>
            <person name="Teasdale R.D."/>
            <person name="Liu E.T."/>
            <person name="Brusic V."/>
            <person name="Quackenbush J."/>
            <person name="Wahlestedt C."/>
            <person name="Mattick J.S."/>
            <person name="Hume D.A."/>
            <person name="Kai C."/>
            <person name="Sasaki D."/>
            <person name="Tomaru Y."/>
            <person name="Fukuda S."/>
            <person name="Kanamori-Katayama M."/>
            <person name="Suzuki M."/>
            <person name="Aoki J."/>
            <person name="Arakawa T."/>
            <person name="Iida J."/>
            <person name="Imamura K."/>
            <person name="Itoh M."/>
            <person name="Kato T."/>
            <person name="Kawaji H."/>
            <person name="Kawagashira N."/>
            <person name="Kawashima T."/>
            <person name="Kojima M."/>
            <person name="Kondo S."/>
            <person name="Konno H."/>
            <person name="Nakano K."/>
            <person name="Ninomiya N."/>
            <person name="Nishio T."/>
            <person name="Okada M."/>
            <person name="Plessy C."/>
            <person name="Shibata K."/>
            <person name="Shiraki T."/>
            <person name="Suzuki S."/>
            <person name="Tagami M."/>
            <person name="Waki K."/>
            <person name="Watahiki A."/>
            <person name="Okamura-Oho Y."/>
            <person name="Suzuki H."/>
            <person name="Kawai J."/>
            <person name="Hayashizaki Y."/>
        </authorList>
    </citation>
    <scope>NUCLEOTIDE SEQUENCE [LARGE SCALE MRNA]</scope>
    <source>
        <strain>C57BL/6J</strain>
        <tissue>Cerebellum</tissue>
        <tissue>Medulla oblongata</tissue>
    </source>
</reference>
<reference key="3">
    <citation type="journal article" date="2004" name="Genome Res.">
        <title>The status, quality, and expansion of the NIH full-length cDNA project: the Mammalian Gene Collection (MGC).</title>
        <authorList>
            <consortium name="The MGC Project Team"/>
        </authorList>
    </citation>
    <scope>NUCLEOTIDE SEQUENCE [LARGE SCALE MRNA]</scope>
</reference>
<reference key="4">
    <citation type="journal article" date="2009" name="Placenta">
        <title>Placental expression of 2,3 bisphosphoglycerate mutase in IGF-II knock out mouse: correlation of circulating maternal 2,3 bisphosphoglycerate and fetal growth.</title>
        <authorList>
            <person name="Gu M."/>
            <person name="Pritlove D.C."/>
            <person name="Boyd C.A."/>
            <person name="Vatish M."/>
        </authorList>
    </citation>
    <scope>TISSUE SPECIFICITY</scope>
</reference>
<reference key="5">
    <citation type="journal article" date="2010" name="Cell">
        <title>A tissue-specific atlas of mouse protein phosphorylation and expression.</title>
        <authorList>
            <person name="Huttlin E.L."/>
            <person name="Jedrychowski M.P."/>
            <person name="Elias J.E."/>
            <person name="Goswami T."/>
            <person name="Rad R."/>
            <person name="Beausoleil S.A."/>
            <person name="Villen J."/>
            <person name="Haas W."/>
            <person name="Sowa M.E."/>
            <person name="Gygi S.P."/>
        </authorList>
    </citation>
    <scope>IDENTIFICATION BY MASS SPECTROMETRY [LARGE SCALE ANALYSIS]</scope>
    <source>
        <tissue>Brain</tissue>
        <tissue>Brown adipose tissue</tissue>
        <tissue>Heart</tissue>
        <tissue>Kidney</tissue>
        <tissue>Liver</tissue>
        <tissue>Lung</tissue>
        <tissue>Spleen</tissue>
        <tissue>Testis</tissue>
    </source>
</reference>
<gene>
    <name type="primary">Bpgm</name>
</gene>
<feature type="initiator methionine" description="Removed" evidence="1">
    <location>
        <position position="1"/>
    </location>
</feature>
<feature type="chain" id="PRO_0000179835" description="Bisphosphoglycerate mutase">
    <location>
        <begin position="2"/>
        <end position="259"/>
    </location>
</feature>
<feature type="active site" description="Tele-phosphohistidine intermediate" evidence="1">
    <location>
        <position position="11"/>
    </location>
</feature>
<feature type="active site" description="Proton donor/acceptor" evidence="1">
    <location>
        <position position="89"/>
    </location>
</feature>
<feature type="binding site" evidence="1">
    <location>
        <begin position="10"/>
        <end position="17"/>
    </location>
    <ligand>
        <name>substrate</name>
    </ligand>
</feature>
<feature type="binding site" evidence="1">
    <location>
        <begin position="23"/>
        <end position="24"/>
    </location>
    <ligand>
        <name>substrate</name>
    </ligand>
</feature>
<feature type="binding site" evidence="1">
    <location>
        <position position="62"/>
    </location>
    <ligand>
        <name>substrate</name>
    </ligand>
</feature>
<feature type="binding site" evidence="1">
    <location>
        <begin position="89"/>
        <end position="92"/>
    </location>
    <ligand>
        <name>substrate</name>
    </ligand>
</feature>
<feature type="binding site" evidence="1">
    <location>
        <position position="100"/>
    </location>
    <ligand>
        <name>substrate</name>
    </ligand>
</feature>
<feature type="binding site" evidence="1">
    <location>
        <begin position="116"/>
        <end position="117"/>
    </location>
    <ligand>
        <name>substrate</name>
    </ligand>
</feature>
<feature type="binding site" evidence="1">
    <location>
        <begin position="189"/>
        <end position="190"/>
    </location>
    <ligand>
        <name>substrate</name>
    </ligand>
</feature>
<feature type="site" description="Transition state stabilizer" evidence="1">
    <location>
        <position position="188"/>
    </location>
</feature>
<feature type="modified residue" description="N-acetylserine" evidence="1">
    <location>
        <position position="2"/>
    </location>
</feature>
<feature type="modified residue" description="Phosphothreonine" evidence="1">
    <location>
        <position position="122"/>
    </location>
</feature>
<evidence type="ECO:0000250" key="1">
    <source>
        <dbReference type="UniProtKB" id="P07738"/>
    </source>
</evidence>
<evidence type="ECO:0000269" key="2">
    <source>
    </source>
</evidence>
<evidence type="ECO:0000269" key="3">
    <source>
    </source>
</evidence>
<evidence type="ECO:0000305" key="4"/>
<sequence length="259" mass="29978">MSKHKLIILRHGEGQWNKENRFCSWVDQKLNNDGLEEARNCGRQLKALNFEFDLVFTSILNRSIHTAWLILEELGQEWVPVESSWRLNERHYGALIGLNREKMALNHGEEQVRLWRRSYNVTPPPIEESHPYFHEIYSDRRYKVCDVPLDQLPRSESLKDVLERLLPYWKERIAPEILKGKSILISAHGNSSRALLKHLEGISDEDIINITLPTGVPILLELDENLRAVGPHQFLGNQEAIQAAIKKVDDQGKVKQGKQ</sequence>